<sequence length="997" mass="114977">MKDGGESKEQQLTVALRIRPINETELAEGATIIAHKVDKQMVVLMDPMEDSDDILRANRSREKSYMFDVAFDYTATQDTVYRFTTKGLIEGVISGYNATVFAYGPTGCGKTYTMLGTDWEPGIYIRTLNDLFKAIEETSDDMEYEVLMSYMEIYNEMIRDLLNPSLGYLDLREDSKGVIQVAGITEVSTINAKEIMQLLMKGNRQRTQEPTAANKTSSRSHAILQVTVRQKSRVKNITQEVRVGRLFMIDLAGSERASQTQNRGLRMKEGAHINRSLLALGNCINALSERGSNKYVNYRDSKLTRLLKDSLGGNSRTVMIAHISPASTSFEESRNTLTYADRAKNIKTRVKRNLLNVSYHIAQYTSIISDLRKEIQRLKKKIDEQGLKQIRSEKSDIRNIQAEVQLHSSTYGRHEMEQLKEQLIRAFREQMDIRRQLMEIENSSMEMQMETSRHFLITAEWEQEKTRRARKWRDEHRKETYGKDDSEKDSDTGDDQSDFIEPPEVITARETIQILEGDQNKLRRQKLELEKRFRDVRHHARRLEEALPKRISSDDQREILSLLCKVHELEIENTEMQSHALLKDNMIRQKDYMVQRFEQHRSLCDEIIQQQRRIIYDHNLTVPHQLNDLYELYFRELEEGVLDKAAVLALKDSQSCLPKIPNLTAEENLQEPDSDQESVRTFGSDNRNPIHRDSYKNLLPQILSETDSDTNKVFKTSPRARHLKNGAVVTPPPIHVNGIISKEYLPRNQINYFPDSTDSKVVLTHREKKEITTSIQSIAVKAARRRSRVLEGDRLQPMKERSNLSVHSMSESEDTVFTDQRFPSSSLHHAASEDNLSSTTGEIVAVHGGGSNHRDSPNLWHRTQKKQAQKLEKREESLEVKRRKKRSRSFEVTGQGLVRPKNHISRNRALESNSDHKIQSNTLQTNRKIMLPIAQVKLPQNQTTTVFKMAEQQEGKHQTNQPGSVKKLISTNQPPRFNYINANASGIYVKDVRVRKY</sequence>
<dbReference type="EMBL" id="BC044083">
    <property type="protein sequence ID" value="AAH44083.1"/>
    <property type="molecule type" value="mRNA"/>
</dbReference>
<dbReference type="RefSeq" id="NP_001079193.1">
    <property type="nucleotide sequence ID" value="NM_001085724.1"/>
</dbReference>
<dbReference type="SMR" id="Q7ZXX2"/>
<dbReference type="DNASU" id="373792"/>
<dbReference type="GeneID" id="373792"/>
<dbReference type="KEGG" id="xla:373792"/>
<dbReference type="AGR" id="Xenbase:XB-GENE-5954830"/>
<dbReference type="CTD" id="373792"/>
<dbReference type="Xenbase" id="XB-GENE-5954830">
    <property type="gene designation" value="kif19.S"/>
</dbReference>
<dbReference type="OMA" id="GEQKQLC"/>
<dbReference type="OrthoDB" id="3176171at2759"/>
<dbReference type="Proteomes" id="UP000186698">
    <property type="component" value="Chromosome 9_10S"/>
</dbReference>
<dbReference type="Bgee" id="373792">
    <property type="expression patterns" value="Expressed in internal ear and 12 other cell types or tissues"/>
</dbReference>
<dbReference type="GO" id="GO:0005930">
    <property type="term" value="C:axoneme"/>
    <property type="evidence" value="ECO:0007669"/>
    <property type="project" value="GOC"/>
</dbReference>
<dbReference type="GO" id="GO:0005929">
    <property type="term" value="C:cilium"/>
    <property type="evidence" value="ECO:0000250"/>
    <property type="project" value="UniProtKB"/>
</dbReference>
<dbReference type="GO" id="GO:0005874">
    <property type="term" value="C:microtubule"/>
    <property type="evidence" value="ECO:0007669"/>
    <property type="project" value="UniProtKB-KW"/>
</dbReference>
<dbReference type="GO" id="GO:0005524">
    <property type="term" value="F:ATP binding"/>
    <property type="evidence" value="ECO:0007669"/>
    <property type="project" value="UniProtKB-KW"/>
</dbReference>
<dbReference type="GO" id="GO:0008017">
    <property type="term" value="F:microtubule binding"/>
    <property type="evidence" value="ECO:0007669"/>
    <property type="project" value="InterPro"/>
</dbReference>
<dbReference type="GO" id="GO:0008574">
    <property type="term" value="F:plus-end-directed microtubule motor activity"/>
    <property type="evidence" value="ECO:0000250"/>
    <property type="project" value="UniProtKB"/>
</dbReference>
<dbReference type="GO" id="GO:0060404">
    <property type="term" value="P:axonemal microtubule depolymerization"/>
    <property type="evidence" value="ECO:0000250"/>
    <property type="project" value="UniProtKB"/>
</dbReference>
<dbReference type="GO" id="GO:0007018">
    <property type="term" value="P:microtubule-based movement"/>
    <property type="evidence" value="ECO:0007669"/>
    <property type="project" value="InterPro"/>
</dbReference>
<dbReference type="GO" id="GO:0070462">
    <property type="term" value="P:plus-end specific microtubule depolymerization"/>
    <property type="evidence" value="ECO:0000250"/>
    <property type="project" value="UniProtKB"/>
</dbReference>
<dbReference type="CDD" id="cd01370">
    <property type="entry name" value="KISc_KIP3_like"/>
    <property type="match status" value="1"/>
</dbReference>
<dbReference type="FunFam" id="3.40.850.10:FF:000037">
    <property type="entry name" value="kinesin-like protein KIF19"/>
    <property type="match status" value="1"/>
</dbReference>
<dbReference type="Gene3D" id="3.40.850.10">
    <property type="entry name" value="Kinesin motor domain"/>
    <property type="match status" value="1"/>
</dbReference>
<dbReference type="InterPro" id="IPR027640">
    <property type="entry name" value="Kinesin-like_fam"/>
</dbReference>
<dbReference type="InterPro" id="IPR019821">
    <property type="entry name" value="Kinesin_motor_CS"/>
</dbReference>
<dbReference type="InterPro" id="IPR001752">
    <property type="entry name" value="Kinesin_motor_dom"/>
</dbReference>
<dbReference type="InterPro" id="IPR036961">
    <property type="entry name" value="Kinesin_motor_dom_sf"/>
</dbReference>
<dbReference type="InterPro" id="IPR027417">
    <property type="entry name" value="P-loop_NTPase"/>
</dbReference>
<dbReference type="PANTHER" id="PTHR47968">
    <property type="entry name" value="CENTROMERE PROTEIN E"/>
    <property type="match status" value="1"/>
</dbReference>
<dbReference type="PANTHER" id="PTHR47968:SF72">
    <property type="entry name" value="KINESIN-LIKE PROTEIN KIF19"/>
    <property type="match status" value="1"/>
</dbReference>
<dbReference type="Pfam" id="PF00225">
    <property type="entry name" value="Kinesin"/>
    <property type="match status" value="1"/>
</dbReference>
<dbReference type="PRINTS" id="PR00380">
    <property type="entry name" value="KINESINHEAVY"/>
</dbReference>
<dbReference type="SMART" id="SM00129">
    <property type="entry name" value="KISc"/>
    <property type="match status" value="1"/>
</dbReference>
<dbReference type="SUPFAM" id="SSF52540">
    <property type="entry name" value="P-loop containing nucleoside triphosphate hydrolases"/>
    <property type="match status" value="1"/>
</dbReference>
<dbReference type="PROSITE" id="PS00411">
    <property type="entry name" value="KINESIN_MOTOR_1"/>
    <property type="match status" value="1"/>
</dbReference>
<dbReference type="PROSITE" id="PS50067">
    <property type="entry name" value="KINESIN_MOTOR_2"/>
    <property type="match status" value="1"/>
</dbReference>
<proteinExistence type="evidence at transcript level"/>
<feature type="chain" id="PRO_0000278247" description="Kinesin-like protein KIF19">
    <location>
        <begin position="1"/>
        <end position="997"/>
    </location>
</feature>
<feature type="domain" description="Kinesin motor" evidence="3">
    <location>
        <begin position="11"/>
        <end position="346"/>
    </location>
</feature>
<feature type="region of interest" description="Disordered" evidence="4">
    <location>
        <begin position="468"/>
        <end position="503"/>
    </location>
</feature>
<feature type="region of interest" description="Disordered" evidence="4">
    <location>
        <begin position="662"/>
        <end position="690"/>
    </location>
</feature>
<feature type="region of interest" description="Disordered" evidence="4">
    <location>
        <begin position="792"/>
        <end position="811"/>
    </location>
</feature>
<feature type="region of interest" description="Disordered" evidence="4">
    <location>
        <begin position="848"/>
        <end position="890"/>
    </location>
</feature>
<feature type="coiled-coil region" evidence="2">
    <location>
        <begin position="360"/>
        <end position="437"/>
    </location>
</feature>
<feature type="coiled-coil region" evidence="2">
    <location>
        <begin position="508"/>
        <end position="577"/>
    </location>
</feature>
<feature type="coiled-coil region" evidence="2">
    <location>
        <begin position="861"/>
        <end position="889"/>
    </location>
</feature>
<feature type="compositionally biased region" description="Basic and acidic residues" evidence="4">
    <location>
        <begin position="468"/>
        <end position="491"/>
    </location>
</feature>
<feature type="compositionally biased region" description="Basic and acidic residues" evidence="4">
    <location>
        <begin position="792"/>
        <end position="802"/>
    </location>
</feature>
<feature type="compositionally biased region" description="Basic and acidic residues" evidence="4">
    <location>
        <begin position="869"/>
        <end position="880"/>
    </location>
</feature>
<feature type="binding site" evidence="3">
    <location>
        <begin position="104"/>
        <end position="111"/>
    </location>
    <ligand>
        <name>ATP</name>
        <dbReference type="ChEBI" id="CHEBI:30616"/>
    </ligand>
</feature>
<protein>
    <recommendedName>
        <fullName>Kinesin-like protein KIF19</fullName>
    </recommendedName>
</protein>
<comment type="function">
    <text evidence="1">Plus end-directed microtubule-dependent motor protein that regulates the length of motile cilia by mediating depolymerization of microtubules at ciliary tips.</text>
</comment>
<comment type="subcellular location">
    <subcellularLocation>
        <location evidence="1">Cytoplasm</location>
        <location evidence="1">Cytoskeleton</location>
    </subcellularLocation>
    <subcellularLocation>
        <location evidence="1">Cell projection</location>
        <location evidence="1">Cilium</location>
    </subcellularLocation>
    <text evidence="1">Localizes to cilia tips.</text>
</comment>
<comment type="similarity">
    <text evidence="3">Belongs to the TRAFAC class myosin-kinesin ATPase superfamily. Kinesin family.</text>
</comment>
<evidence type="ECO:0000250" key="1"/>
<evidence type="ECO:0000255" key="2"/>
<evidence type="ECO:0000255" key="3">
    <source>
        <dbReference type="PROSITE-ProRule" id="PRU00283"/>
    </source>
</evidence>
<evidence type="ECO:0000256" key="4">
    <source>
        <dbReference type="SAM" id="MobiDB-lite"/>
    </source>
</evidence>
<reference key="1">
    <citation type="submission" date="2003-01" db="EMBL/GenBank/DDBJ databases">
        <authorList>
            <consortium name="NIH - Xenopus Gene Collection (XGC) project"/>
        </authorList>
    </citation>
    <scope>NUCLEOTIDE SEQUENCE [LARGE SCALE MRNA]</scope>
    <source>
        <tissue>Embryo</tissue>
    </source>
</reference>
<gene>
    <name type="primary">kif19</name>
</gene>
<organism>
    <name type="scientific">Xenopus laevis</name>
    <name type="common">African clawed frog</name>
    <dbReference type="NCBI Taxonomy" id="8355"/>
    <lineage>
        <taxon>Eukaryota</taxon>
        <taxon>Metazoa</taxon>
        <taxon>Chordata</taxon>
        <taxon>Craniata</taxon>
        <taxon>Vertebrata</taxon>
        <taxon>Euteleostomi</taxon>
        <taxon>Amphibia</taxon>
        <taxon>Batrachia</taxon>
        <taxon>Anura</taxon>
        <taxon>Pipoidea</taxon>
        <taxon>Pipidae</taxon>
        <taxon>Xenopodinae</taxon>
        <taxon>Xenopus</taxon>
        <taxon>Xenopus</taxon>
    </lineage>
</organism>
<accession>Q7ZXX2</accession>
<keyword id="KW-0067">ATP-binding</keyword>
<keyword id="KW-0966">Cell projection</keyword>
<keyword id="KW-0969">Cilium</keyword>
<keyword id="KW-0175">Coiled coil</keyword>
<keyword id="KW-0963">Cytoplasm</keyword>
<keyword id="KW-0206">Cytoskeleton</keyword>
<keyword id="KW-0493">Microtubule</keyword>
<keyword id="KW-0505">Motor protein</keyword>
<keyword id="KW-0547">Nucleotide-binding</keyword>
<keyword id="KW-1185">Reference proteome</keyword>
<name>KIF19_XENLA</name>